<reference key="1">
    <citation type="journal article" date="2010" name="Genome Biol.">
        <title>Structure and dynamics of the pan-genome of Streptococcus pneumoniae and closely related species.</title>
        <authorList>
            <person name="Donati C."/>
            <person name="Hiller N.L."/>
            <person name="Tettelin H."/>
            <person name="Muzzi A."/>
            <person name="Croucher N.J."/>
            <person name="Angiuoli S.V."/>
            <person name="Oggioni M."/>
            <person name="Dunning Hotopp J.C."/>
            <person name="Hu F.Z."/>
            <person name="Riley D.R."/>
            <person name="Covacci A."/>
            <person name="Mitchell T.J."/>
            <person name="Bentley S.D."/>
            <person name="Kilian M."/>
            <person name="Ehrlich G.D."/>
            <person name="Rappuoli R."/>
            <person name="Moxon E.R."/>
            <person name="Masignani V."/>
        </authorList>
    </citation>
    <scope>NUCLEOTIDE SEQUENCE [LARGE SCALE GENOMIC DNA]</scope>
    <source>
        <strain>Taiwan19F-14</strain>
    </source>
</reference>
<sequence length="105" mass="12411">MDKKELFDALDDFSQQLLVTLADVEAIKKNLKSLVEENTALRLENSKLRERLGEVEADAPVKAKHVRESVRRIYRDGFHVCNDFYGQRREQDEECMFCDELLYRE</sequence>
<evidence type="ECO:0000255" key="1">
    <source>
        <dbReference type="HAMAP-Rule" id="MF_01159"/>
    </source>
</evidence>
<protein>
    <recommendedName>
        <fullName evidence="1">Replication initiation control protein YabA</fullName>
    </recommendedName>
</protein>
<comment type="function">
    <text evidence="1">Involved in control of chromosome replication initiation. Inhibits the cooperative binding of DnaA to the oriC region, thus negatively regulating initiation of chromosome replication. Inhibits the ability of DnaA-ATP to form a helix on DNA; does not disassemble preformed DnaA-DNA helices. Decreases the residence time of DnaA on the chromosome at its binding sites (oriC, replication forks and promoter-binding sites). Tethers DnaA to the replication machinery via the DNA polymerase beta sliding clamp subunit (dnaN). Associates with oriC and other DnaA targets on the chromosome in a DnaA-dependent manner.</text>
</comment>
<comment type="cofactor">
    <cofactor evidence="1">
        <name>Zn(2+)</name>
        <dbReference type="ChEBI" id="CHEBI:29105"/>
    </cofactor>
    <text evidence="1">Binds 1 zinc ion per subunit.</text>
</comment>
<comment type="subunit">
    <text evidence="1">Homotetramer. Interacts with both DnaA and DnaN, acting as a bridge between these two proteins.</text>
</comment>
<comment type="subcellular location">
    <subcellularLocation>
        <location evidence="1">Cytoplasm</location>
        <location evidence="1">Nucleoid</location>
    </subcellularLocation>
    <text evidence="1">Localizes in tight foci, which correspond to the replisome at mid-cell throughout the cell cycle.</text>
</comment>
<comment type="similarity">
    <text evidence="1">Belongs to the YabA family.</text>
</comment>
<accession>C1CRV7</accession>
<organism>
    <name type="scientific">Streptococcus pneumoniae (strain Taiwan19F-14)</name>
    <dbReference type="NCBI Taxonomy" id="487213"/>
    <lineage>
        <taxon>Bacteria</taxon>
        <taxon>Bacillati</taxon>
        <taxon>Bacillota</taxon>
        <taxon>Bacilli</taxon>
        <taxon>Lactobacillales</taxon>
        <taxon>Streptococcaceae</taxon>
        <taxon>Streptococcus</taxon>
    </lineage>
</organism>
<dbReference type="EMBL" id="CP000921">
    <property type="protein sequence ID" value="ACO23039.1"/>
    <property type="molecule type" value="Genomic_DNA"/>
</dbReference>
<dbReference type="RefSeq" id="WP_000358228.1">
    <property type="nucleotide sequence ID" value="NC_012469.1"/>
</dbReference>
<dbReference type="SMR" id="C1CRV7"/>
<dbReference type="GeneID" id="93739792"/>
<dbReference type="KEGG" id="snt:SPT_1263"/>
<dbReference type="HOGENOM" id="CLU_157169_0_0_9"/>
<dbReference type="GO" id="GO:0009295">
    <property type="term" value="C:nucleoid"/>
    <property type="evidence" value="ECO:0007669"/>
    <property type="project" value="UniProtKB-SubCell"/>
</dbReference>
<dbReference type="GO" id="GO:0006260">
    <property type="term" value="P:DNA replication"/>
    <property type="evidence" value="ECO:0007669"/>
    <property type="project" value="UniProtKB-UniRule"/>
</dbReference>
<dbReference type="HAMAP" id="MF_01159">
    <property type="entry name" value="YabA"/>
    <property type="match status" value="1"/>
</dbReference>
<dbReference type="InterPro" id="IPR010377">
    <property type="entry name" value="YabA"/>
</dbReference>
<dbReference type="NCBIfam" id="NF009640">
    <property type="entry name" value="PRK13169.1-1"/>
    <property type="match status" value="1"/>
</dbReference>
<dbReference type="Pfam" id="PF06156">
    <property type="entry name" value="YabA"/>
    <property type="match status" value="1"/>
</dbReference>
<dbReference type="PIRSF" id="PIRSF021439">
    <property type="entry name" value="DUF972"/>
    <property type="match status" value="1"/>
</dbReference>
<feature type="chain" id="PRO_1000164312" description="Replication initiation control protein YabA">
    <location>
        <begin position="1"/>
        <end position="105"/>
    </location>
</feature>
<feature type="binding site" evidence="1">
    <location>
        <position position="79"/>
    </location>
    <ligand>
        <name>Zn(2+)</name>
        <dbReference type="ChEBI" id="CHEBI:29105"/>
    </ligand>
</feature>
<feature type="binding site" evidence="1">
    <location>
        <position position="81"/>
    </location>
    <ligand>
        <name>Zn(2+)</name>
        <dbReference type="ChEBI" id="CHEBI:29105"/>
    </ligand>
</feature>
<feature type="binding site" evidence="1">
    <location>
        <position position="95"/>
    </location>
    <ligand>
        <name>Zn(2+)</name>
        <dbReference type="ChEBI" id="CHEBI:29105"/>
    </ligand>
</feature>
<feature type="binding site" evidence="1">
    <location>
        <position position="98"/>
    </location>
    <ligand>
        <name>Zn(2+)</name>
        <dbReference type="ChEBI" id="CHEBI:29105"/>
    </ligand>
</feature>
<proteinExistence type="inferred from homology"/>
<name>YABA_STRZT</name>
<keyword id="KW-0963">Cytoplasm</keyword>
<keyword id="KW-0235">DNA replication</keyword>
<keyword id="KW-0236">DNA replication inhibitor</keyword>
<keyword id="KW-0479">Metal-binding</keyword>
<keyword id="KW-0862">Zinc</keyword>
<gene>
    <name evidence="1" type="primary">yabA</name>
    <name type="ordered locus">SPT_1263</name>
</gene>